<name>FBXW7_BOVIN</name>
<protein>
    <recommendedName>
        <fullName evidence="2">F-box/WD repeat-containing protein 7</fullName>
    </recommendedName>
    <alternativeName>
        <fullName>F-box and WD-40 domain-containing protein 7</fullName>
    </alternativeName>
</protein>
<keyword id="KW-0025">Alternative splicing</keyword>
<keyword id="KW-0158">Chromosome</keyword>
<keyword id="KW-0227">DNA damage</keyword>
<keyword id="KW-0234">DNA repair</keyword>
<keyword id="KW-0539">Nucleus</keyword>
<keyword id="KW-0597">Phosphoprotein</keyword>
<keyword id="KW-1185">Reference proteome</keyword>
<keyword id="KW-0677">Repeat</keyword>
<keyword id="KW-0832">Ubl conjugation</keyword>
<keyword id="KW-0833">Ubl conjugation pathway</keyword>
<keyword id="KW-0853">WD repeat</keyword>
<reference key="1">
    <citation type="journal article" date="2009" name="Genome Biol.">
        <title>A whole-genome assembly of the domestic cow, Bos taurus.</title>
        <authorList>
            <person name="Zimin A.V."/>
            <person name="Delcher A.L."/>
            <person name="Florea L."/>
            <person name="Kelley D.R."/>
            <person name="Schatz M.C."/>
            <person name="Puiu D."/>
            <person name="Hanrahan F."/>
            <person name="Pertea G."/>
            <person name="Van Tassell C.P."/>
            <person name="Sonstegard T.S."/>
            <person name="Marcais G."/>
            <person name="Roberts M."/>
            <person name="Subramanian P."/>
            <person name="Yorke J.A."/>
            <person name="Salzberg S.L."/>
        </authorList>
    </citation>
    <scope>NUCLEOTIDE SEQUENCE [LARGE SCALE GENOMIC DNA]</scope>
    <source>
        <strain>Hereford</strain>
    </source>
</reference>
<reference key="2">
    <citation type="submission" date="2006-08" db="EMBL/GenBank/DDBJ databases">
        <authorList>
            <consortium name="NIH - Mammalian Gene Collection (MGC) project"/>
        </authorList>
    </citation>
    <scope>NUCLEOTIDE SEQUENCE [LARGE SCALE MRNA] (ISOFORM 1)</scope>
    <source>
        <strain>Hereford</strain>
        <tissue>Brain cortex</tissue>
    </source>
</reference>
<reference key="3">
    <citation type="journal article" date="2015" name="Nature">
        <title>Theileria parasites secrete a prolyl isomerase to maintain host leukocyte transformation.</title>
        <authorList>
            <person name="Marsolier J."/>
            <person name="Perichon M."/>
            <person name="DeBarry J.D."/>
            <person name="Villoutreix B.O."/>
            <person name="Chluba J."/>
            <person name="Lopez T."/>
            <person name="Garrido C."/>
            <person name="Zhou X.Z."/>
            <person name="Lu K.P."/>
            <person name="Fritsch L."/>
            <person name="Ait-Si-Ali S."/>
            <person name="Mhadhbi M."/>
            <person name="Medjkane S."/>
            <person name="Weitzman J.B."/>
        </authorList>
    </citation>
    <scope>INTERACTION WITH T.ANNULATA PIN1</scope>
    <scope>UBIQUITINATION</scope>
</reference>
<gene>
    <name evidence="2" type="primary">FBXW7</name>
    <name evidence="2" type="synonym">FBW7</name>
</gene>
<proteinExistence type="evidence at protein level"/>
<feature type="chain" id="PRO_0000432705" description="F-box/WD repeat-containing protein 7">
    <location>
        <begin position="1"/>
        <end position="706"/>
    </location>
</feature>
<feature type="domain" description="F-box" evidence="4">
    <location>
        <begin position="277"/>
        <end position="323"/>
    </location>
</feature>
<feature type="repeat" description="WD 1" evidence="3">
    <location>
        <begin position="377"/>
        <end position="417"/>
    </location>
</feature>
<feature type="repeat" description="WD 2" evidence="3">
    <location>
        <begin position="419"/>
        <end position="455"/>
    </location>
</feature>
<feature type="repeat" description="WD 3" evidence="3">
    <location>
        <begin position="458"/>
        <end position="497"/>
    </location>
</feature>
<feature type="repeat" description="WD 4" evidence="3">
    <location>
        <begin position="499"/>
        <end position="535"/>
    </location>
</feature>
<feature type="repeat" description="WD 5" evidence="3">
    <location>
        <begin position="538"/>
        <end position="577"/>
    </location>
</feature>
<feature type="repeat" description="WD 6" evidence="3">
    <location>
        <begin position="579"/>
        <end position="617"/>
    </location>
</feature>
<feature type="repeat" description="WD 7" evidence="3">
    <location>
        <begin position="621"/>
        <end position="658"/>
    </location>
</feature>
<feature type="region of interest" description="Disordered" evidence="5">
    <location>
        <begin position="1"/>
        <end position="157"/>
    </location>
</feature>
<feature type="compositionally biased region" description="Basic and acidic residues" evidence="5">
    <location>
        <begin position="32"/>
        <end position="54"/>
    </location>
</feature>
<feature type="compositionally biased region" description="Polar residues" evidence="5">
    <location>
        <begin position="69"/>
        <end position="83"/>
    </location>
</feature>
<feature type="compositionally biased region" description="Acidic residues" evidence="5">
    <location>
        <begin position="86"/>
        <end position="128"/>
    </location>
</feature>
<feature type="compositionally biased region" description="Basic and acidic residues" evidence="5">
    <location>
        <begin position="129"/>
        <end position="138"/>
    </location>
</feature>
<feature type="modified residue" description="Phosphoserine" evidence="2">
    <location>
        <position position="26"/>
    </location>
</feature>
<feature type="modified residue" description="Phosphothreonine" evidence="2">
    <location>
        <position position="204"/>
    </location>
</feature>
<feature type="modified residue" description="Phosphoserine" evidence="2">
    <location>
        <position position="226"/>
    </location>
</feature>
<feature type="splice variant" id="VSP_060882" description="In isoform 1.">
    <original>MNQELLSVGSKRRRTGGSLRGNPSSSQADEEQMNRVLEEEQQQPRHQEEEHAARNGEVVGAEPRPGDQNDPQQGQLEENNNRFISVDEDSSGNQEEQEEDEEHAGEQDEEDEEEEEMDQESDDFDQSDDSSREDEHTHRNSVTNSNSIVDLPIHQRSSPFYTKTT</original>
    <variation>MCVPRSGLILSCICLYCGVLLPVLLPNLPFLTCLSMSTLESVTYLPEKGLYCQRLPNSRTHGGTESLKGKNPENMGFYGTLKMIFY</variation>
    <location>
        <begin position="1"/>
        <end position="165"/>
    </location>
</feature>
<feature type="sequence conflict" description="In Ref. 2; AAI19947." evidence="7" ref="2">
    <original>R</original>
    <variation>N</variation>
    <location sequence="F1MNN4-1">
        <position position="99"/>
    </location>
</feature>
<accession>F1MNN4</accession>
<accession>A0A3Q1N420</accession>
<accession>Q0VCX6</accession>
<dbReference type="EMBL" id="DAAA02044177">
    <property type="status" value="NOT_ANNOTATED_CDS"/>
    <property type="molecule type" value="Genomic_DNA"/>
</dbReference>
<dbReference type="EMBL" id="BC119946">
    <property type="protein sequence ID" value="AAI19947.1"/>
    <property type="molecule type" value="mRNA"/>
</dbReference>
<dbReference type="RefSeq" id="NP_001069717.1">
    <molecule id="F1MNN4-1"/>
    <property type="nucleotide sequence ID" value="NM_001076249.1"/>
</dbReference>
<dbReference type="RefSeq" id="XP_005217523.1">
    <property type="nucleotide sequence ID" value="XM_005217466.3"/>
</dbReference>
<dbReference type="RefSeq" id="XP_005217524.1">
    <property type="nucleotide sequence ID" value="XM_005217467.3"/>
</dbReference>
<dbReference type="RefSeq" id="XP_024833182.1">
    <molecule id="F1MNN4-2"/>
    <property type="nucleotide sequence ID" value="XM_024977414.2"/>
</dbReference>
<dbReference type="RefSeq" id="XP_059732122.1">
    <molecule id="F1MNN4-2"/>
    <property type="nucleotide sequence ID" value="XM_059876139.1"/>
</dbReference>
<dbReference type="RefSeq" id="XP_059732123.1">
    <molecule id="F1MNN4-2"/>
    <property type="nucleotide sequence ID" value="XM_059876140.1"/>
</dbReference>
<dbReference type="SMR" id="F1MNN4"/>
<dbReference type="DIP" id="DIP-61528N"/>
<dbReference type="FunCoup" id="F1MNN4">
    <property type="interactions" value="2014"/>
</dbReference>
<dbReference type="IntAct" id="F1MNN4">
    <property type="interactions" value="3"/>
</dbReference>
<dbReference type="STRING" id="9913.ENSBTAP00000064414"/>
<dbReference type="PaxDb" id="9913-ENSBTAP00000010457"/>
<dbReference type="GeneID" id="540932"/>
<dbReference type="KEGG" id="bta:540932"/>
<dbReference type="CTD" id="55294"/>
<dbReference type="VEuPathDB" id="HostDB:ENSBTAG00000007953"/>
<dbReference type="eggNOG" id="KOG0274">
    <property type="taxonomic scope" value="Eukaryota"/>
</dbReference>
<dbReference type="HOGENOM" id="CLU_000288_103_7_1"/>
<dbReference type="InParanoid" id="F1MNN4"/>
<dbReference type="OrthoDB" id="190105at2759"/>
<dbReference type="TreeFam" id="TF101074"/>
<dbReference type="Reactome" id="R-BTA-8951664">
    <property type="pathway name" value="Neddylation"/>
</dbReference>
<dbReference type="Reactome" id="R-BTA-983168">
    <property type="pathway name" value="Antigen processing: Ubiquitination &amp; Proteasome degradation"/>
</dbReference>
<dbReference type="UniPathway" id="UPA00143"/>
<dbReference type="Proteomes" id="UP000009136">
    <property type="component" value="Chromosome 17"/>
</dbReference>
<dbReference type="Bgee" id="ENSBTAG00000007953">
    <property type="expression patterns" value="Expressed in occipital lobe and 104 other cell types or tissues"/>
</dbReference>
<dbReference type="GO" id="GO:0005694">
    <property type="term" value="C:chromosome"/>
    <property type="evidence" value="ECO:0007669"/>
    <property type="project" value="UniProtKB-SubCell"/>
</dbReference>
<dbReference type="GO" id="GO:0005737">
    <property type="term" value="C:cytoplasm"/>
    <property type="evidence" value="ECO:0000318"/>
    <property type="project" value="GO_Central"/>
</dbReference>
<dbReference type="GO" id="GO:0005654">
    <property type="term" value="C:nucleoplasm"/>
    <property type="evidence" value="ECO:0007669"/>
    <property type="project" value="UniProtKB-SubCell"/>
</dbReference>
<dbReference type="GO" id="GO:0005634">
    <property type="term" value="C:nucleus"/>
    <property type="evidence" value="ECO:0000318"/>
    <property type="project" value="GO_Central"/>
</dbReference>
<dbReference type="GO" id="GO:1990452">
    <property type="term" value="C:Parkin-FBXW7-Cul1 ubiquitin ligase complex"/>
    <property type="evidence" value="ECO:0007669"/>
    <property type="project" value="Ensembl"/>
</dbReference>
<dbReference type="GO" id="GO:0019005">
    <property type="term" value="C:SCF ubiquitin ligase complex"/>
    <property type="evidence" value="ECO:0000250"/>
    <property type="project" value="UniProtKB"/>
</dbReference>
<dbReference type="GO" id="GO:0030332">
    <property type="term" value="F:cyclin binding"/>
    <property type="evidence" value="ECO:0007669"/>
    <property type="project" value="Ensembl"/>
</dbReference>
<dbReference type="GO" id="GO:0042802">
    <property type="term" value="F:identical protein binding"/>
    <property type="evidence" value="ECO:0007669"/>
    <property type="project" value="Ensembl"/>
</dbReference>
<dbReference type="GO" id="GO:0050816">
    <property type="term" value="F:phosphothreonine residue binding"/>
    <property type="evidence" value="ECO:0000250"/>
    <property type="project" value="UniProtKB"/>
</dbReference>
<dbReference type="GO" id="GO:0043130">
    <property type="term" value="F:ubiquitin binding"/>
    <property type="evidence" value="ECO:0000318"/>
    <property type="project" value="GO_Central"/>
</dbReference>
<dbReference type="GO" id="GO:0031625">
    <property type="term" value="F:ubiquitin protein ligase binding"/>
    <property type="evidence" value="ECO:0007669"/>
    <property type="project" value="Ensembl"/>
</dbReference>
<dbReference type="GO" id="GO:1990756">
    <property type="term" value="F:ubiquitin-like ligase-substrate adaptor activity"/>
    <property type="evidence" value="ECO:0000250"/>
    <property type="project" value="UniProtKB"/>
</dbReference>
<dbReference type="GO" id="GO:0097027">
    <property type="term" value="F:ubiquitin-protein transferase activator activity"/>
    <property type="evidence" value="ECO:0007669"/>
    <property type="project" value="Ensembl"/>
</dbReference>
<dbReference type="GO" id="GO:0006974">
    <property type="term" value="P:DNA damage response"/>
    <property type="evidence" value="ECO:0000250"/>
    <property type="project" value="UniProtKB"/>
</dbReference>
<dbReference type="GO" id="GO:0006281">
    <property type="term" value="P:DNA repair"/>
    <property type="evidence" value="ECO:0007669"/>
    <property type="project" value="UniProtKB-KW"/>
</dbReference>
<dbReference type="GO" id="GO:0010629">
    <property type="term" value="P:negative regulation of gene expression"/>
    <property type="evidence" value="ECO:0007669"/>
    <property type="project" value="Ensembl"/>
</dbReference>
<dbReference type="GO" id="GO:2001205">
    <property type="term" value="P:negative regulation of osteoclast development"/>
    <property type="evidence" value="ECO:0007669"/>
    <property type="project" value="Ensembl"/>
</dbReference>
<dbReference type="GO" id="GO:0070374">
    <property type="term" value="P:positive regulation of ERK1 and ERK2 cascade"/>
    <property type="evidence" value="ECO:0007669"/>
    <property type="project" value="Ensembl"/>
</dbReference>
<dbReference type="GO" id="GO:1903378">
    <property type="term" value="P:positive regulation of oxidative stress-induced neuron intrinsic apoptotic signaling pathway"/>
    <property type="evidence" value="ECO:0007669"/>
    <property type="project" value="Ensembl"/>
</dbReference>
<dbReference type="GO" id="GO:1901800">
    <property type="term" value="P:positive regulation of proteasomal protein catabolic process"/>
    <property type="evidence" value="ECO:0007669"/>
    <property type="project" value="Ensembl"/>
</dbReference>
<dbReference type="GO" id="GO:1903955">
    <property type="term" value="P:positive regulation of protein targeting to mitochondrion"/>
    <property type="evidence" value="ECO:0007669"/>
    <property type="project" value="Ensembl"/>
</dbReference>
<dbReference type="GO" id="GO:0031398">
    <property type="term" value="P:positive regulation of protein ubiquitination"/>
    <property type="evidence" value="ECO:0007669"/>
    <property type="project" value="Ensembl"/>
</dbReference>
<dbReference type="GO" id="GO:2000060">
    <property type="term" value="P:positive regulation of ubiquitin-dependent protein catabolic process"/>
    <property type="evidence" value="ECO:0007669"/>
    <property type="project" value="Ensembl"/>
</dbReference>
<dbReference type="GO" id="GO:0043161">
    <property type="term" value="P:proteasome-mediated ubiquitin-dependent protein catabolic process"/>
    <property type="evidence" value="ECO:0000250"/>
    <property type="project" value="UniProtKB"/>
</dbReference>
<dbReference type="GO" id="GO:0070534">
    <property type="term" value="P:protein K63-linked ubiquitination"/>
    <property type="evidence" value="ECO:0000250"/>
    <property type="project" value="UniProtKB"/>
</dbReference>
<dbReference type="GO" id="GO:0050821">
    <property type="term" value="P:protein stabilization"/>
    <property type="evidence" value="ECO:0007669"/>
    <property type="project" value="Ensembl"/>
</dbReference>
<dbReference type="GO" id="GO:0042752">
    <property type="term" value="P:regulation of circadian rhythm"/>
    <property type="evidence" value="ECO:0007669"/>
    <property type="project" value="Ensembl"/>
</dbReference>
<dbReference type="GO" id="GO:1901524">
    <property type="term" value="P:regulation of mitophagy"/>
    <property type="evidence" value="ECO:0007669"/>
    <property type="project" value="Ensembl"/>
</dbReference>
<dbReference type="GO" id="GO:0031146">
    <property type="term" value="P:SCF-dependent proteasomal ubiquitin-dependent protein catabolic process"/>
    <property type="evidence" value="ECO:0000250"/>
    <property type="project" value="UniProtKB"/>
</dbReference>
<dbReference type="GO" id="GO:0007062">
    <property type="term" value="P:sister chromatid cohesion"/>
    <property type="evidence" value="ECO:0007669"/>
    <property type="project" value="Ensembl"/>
</dbReference>
<dbReference type="GO" id="GO:0010992">
    <property type="term" value="P:ubiquitin recycling"/>
    <property type="evidence" value="ECO:0000318"/>
    <property type="project" value="GO_Central"/>
</dbReference>
<dbReference type="CDD" id="cd22133">
    <property type="entry name" value="F-box_FBXW7"/>
    <property type="match status" value="1"/>
</dbReference>
<dbReference type="CDD" id="cd00200">
    <property type="entry name" value="WD40"/>
    <property type="match status" value="1"/>
</dbReference>
<dbReference type="FunFam" id="1.20.1280.50:FF:000004">
    <property type="entry name" value="F-box/WD repeat-containing protein 7 isoform X1"/>
    <property type="match status" value="1"/>
</dbReference>
<dbReference type="FunFam" id="2.130.10.10:FF:000032">
    <property type="entry name" value="F-box/WD repeat-containing protein 7 isoform X1"/>
    <property type="match status" value="1"/>
</dbReference>
<dbReference type="Gene3D" id="1.20.1280.50">
    <property type="match status" value="1"/>
</dbReference>
<dbReference type="Gene3D" id="2.130.10.10">
    <property type="entry name" value="YVTN repeat-like/Quinoprotein amine dehydrogenase"/>
    <property type="match status" value="1"/>
</dbReference>
<dbReference type="InterPro" id="IPR036047">
    <property type="entry name" value="F-box-like_dom_sf"/>
</dbReference>
<dbReference type="InterPro" id="IPR001810">
    <property type="entry name" value="F-box_dom"/>
</dbReference>
<dbReference type="InterPro" id="IPR020472">
    <property type="entry name" value="G-protein_beta_WD-40_rep"/>
</dbReference>
<dbReference type="InterPro" id="IPR015943">
    <property type="entry name" value="WD40/YVTN_repeat-like_dom_sf"/>
</dbReference>
<dbReference type="InterPro" id="IPR019775">
    <property type="entry name" value="WD40_repeat_CS"/>
</dbReference>
<dbReference type="InterPro" id="IPR036322">
    <property type="entry name" value="WD40_repeat_dom_sf"/>
</dbReference>
<dbReference type="InterPro" id="IPR001680">
    <property type="entry name" value="WD40_rpt"/>
</dbReference>
<dbReference type="PANTHER" id="PTHR19849:SF1">
    <property type="entry name" value="F-BOX_WD REPEAT-CONTAINING PROTEIN 7"/>
    <property type="match status" value="1"/>
</dbReference>
<dbReference type="PANTHER" id="PTHR19849">
    <property type="entry name" value="PHOSPHOLIPASE A-2-ACTIVATING PROTEIN"/>
    <property type="match status" value="1"/>
</dbReference>
<dbReference type="Pfam" id="PF12937">
    <property type="entry name" value="F-box-like"/>
    <property type="match status" value="1"/>
</dbReference>
<dbReference type="Pfam" id="PF00400">
    <property type="entry name" value="WD40"/>
    <property type="match status" value="7"/>
</dbReference>
<dbReference type="PRINTS" id="PR00320">
    <property type="entry name" value="GPROTEINBRPT"/>
</dbReference>
<dbReference type="SMART" id="SM00256">
    <property type="entry name" value="FBOX"/>
    <property type="match status" value="1"/>
</dbReference>
<dbReference type="SMART" id="SM00320">
    <property type="entry name" value="WD40"/>
    <property type="match status" value="8"/>
</dbReference>
<dbReference type="SUPFAM" id="SSF81383">
    <property type="entry name" value="F-box domain"/>
    <property type="match status" value="1"/>
</dbReference>
<dbReference type="SUPFAM" id="SSF50978">
    <property type="entry name" value="WD40 repeat-like"/>
    <property type="match status" value="1"/>
</dbReference>
<dbReference type="PROSITE" id="PS50181">
    <property type="entry name" value="FBOX"/>
    <property type="match status" value="1"/>
</dbReference>
<dbReference type="PROSITE" id="PS00678">
    <property type="entry name" value="WD_REPEATS_1"/>
    <property type="match status" value="5"/>
</dbReference>
<dbReference type="PROSITE" id="PS50082">
    <property type="entry name" value="WD_REPEATS_2"/>
    <property type="match status" value="7"/>
</dbReference>
<dbReference type="PROSITE" id="PS50294">
    <property type="entry name" value="WD_REPEATS_REGION"/>
    <property type="match status" value="1"/>
</dbReference>
<organism>
    <name type="scientific">Bos taurus</name>
    <name type="common">Bovine</name>
    <dbReference type="NCBI Taxonomy" id="9913"/>
    <lineage>
        <taxon>Eukaryota</taxon>
        <taxon>Metazoa</taxon>
        <taxon>Chordata</taxon>
        <taxon>Craniata</taxon>
        <taxon>Vertebrata</taxon>
        <taxon>Euteleostomi</taxon>
        <taxon>Mammalia</taxon>
        <taxon>Eutheria</taxon>
        <taxon>Laurasiatheria</taxon>
        <taxon>Artiodactyla</taxon>
        <taxon>Ruminantia</taxon>
        <taxon>Pecora</taxon>
        <taxon>Bovidae</taxon>
        <taxon>Bovinae</taxon>
        <taxon>Bos</taxon>
    </lineage>
</organism>
<evidence type="ECO:0000250" key="1">
    <source>
        <dbReference type="UniProtKB" id="Q8VBV4"/>
    </source>
</evidence>
<evidence type="ECO:0000250" key="2">
    <source>
        <dbReference type="UniProtKB" id="Q969H0"/>
    </source>
</evidence>
<evidence type="ECO:0000255" key="3"/>
<evidence type="ECO:0000255" key="4">
    <source>
        <dbReference type="PROSITE-ProRule" id="PRU00080"/>
    </source>
</evidence>
<evidence type="ECO:0000256" key="5">
    <source>
        <dbReference type="SAM" id="MobiDB-lite"/>
    </source>
</evidence>
<evidence type="ECO:0000269" key="6">
    <source>
    </source>
</evidence>
<evidence type="ECO:0000305" key="7"/>
<comment type="function">
    <text evidence="1 2">Substrate recognition component of a SCF (SKP1-CUL1-F-box protein) E3 ubiquitin-protein ligase complex which mediates the ubiquitination and subsequent proteasomal degradation of target proteins. Recognizes and binds phosphorylated sites/phosphodegrons within target proteins and thereafter brings them to the SCF complex for ubiquitination (By similarity). Identified substrates include cyclin-E (CCNE1 or CCNE2), DISC1, JUN, MYC, NOTCH1 released notch intracellular domain (NICD), NOTCH2, MCL1, MLST8, RICTOR, and probably PSEN1. Acts as a negative regulator of JNK signaling by binding to phosphorylated JUN and promoting its ubiquitination and subsequent degradation (By similarity). SCF(FBXW7) complex mediates the ubiquitination and subsequent degradation of NFE2L1 (By similarity). Involved in bone homeostasis and negative regulation of osteoclast differentiation (By similarity). Also able to promote 'Lys-63'-linked ubiquitination in response to DNA damage (By similarity). The SCF(FBXW7) complex facilitates double-strand break repair following phosphorylation by ATM: phosphorylation promotes localization to sites of double-strand breaks and 'Lys-63'-linked ubiquitination of phosphorylated XRCC4, enhancing DNA non-homologous end joining (By similarity).</text>
</comment>
<comment type="pathway">
    <text evidence="2">Protein modification; protein ubiquitination.</text>
</comment>
<comment type="subunit">
    <text evidence="1 2">Homodimer; homodimerization plays a role in substrate binding and/or ubiquitination and degradation. Component of the SCF(FBXW7) complex consisting of CUL1, RBX1, SKP1 and FBXW7. Interacts (via F-box domain) with SKP1. Interacts (via F-box domain) with pseudophosphatase STYX; the interaction is direct and prevents FBXW7 interaction with SKP1. Interacts with cyclin-E (CCNE1 or CCNE2). Interacts with PSEN1. Forms a trimeric complex with NOTCH1 and SGK1. Interacts with NOTCH1 intracellular domain/NICD and NOTCH4 intracellular domain/NICD. Interacts with NOTCH2 intracellular domain (N2ICD). Interacts with MYC (when phosphorylated). Interacts with USP28, counteracting ubiquitination of MYC. Interacts with JUN. Found in a complex with JUN and PRR7. Interacts with JUN and PRR7; the interaction inhibits ubiquitination-mediated JUN degradation, promoting its phosphorylation and transcriptional activity. Interacts (when phosphorylated at Thr-204) with PIN1, disrupting FBXW7 dimerization and promoting FBXW7 autoubiquitination and degradation. Interacts with UBE2QL1. Interacts with FAM83D; promotes FBXW7 degradation. Interacts with MYCN; FBXW7 competes with AURKA for binding to unphosphorylated MYCN but not for binding to phosphorylated MYCN. Interacts with STOML1. Interacts with NFE2L1. Interacts with USP36, counteracting ubiquitination of MYC. Interacts with RICTOR; mediates RICTOR ubiquitination and degradation.l Interacts with USP38, counteracting ubiquitination of MYC (By similarity).</text>
</comment>
<comment type="subunit">
    <text evidence="6">(Microbial infection) In case of infection, interacts with T.annulata PIN1 (TaPIN1); leading to FBXW7 autoubiquitination and subsequent degradation: FBXW7 degradation promotes stabilization of JUN, which promotes cell transformation (PubMed:25624101).</text>
</comment>
<comment type="subcellular location">
    <subcellularLocation>
        <location evidence="2">Nucleus</location>
        <location evidence="2">Nucleoplasm</location>
    </subcellularLocation>
    <subcellularLocation>
        <location evidence="2">Chromosome</location>
    </subcellularLocation>
    <text evidence="2">Localizes to site of double-strand breaks following phosphorylation by ATM.</text>
</comment>
<comment type="alternative products">
    <event type="alternative splicing"/>
    <isoform>
        <id>F1MNN4-2</id>
        <name>2</name>
        <sequence type="displayed"/>
    </isoform>
    <isoform>
        <id>F1MNN4-1</id>
        <name>1</name>
        <sequence type="described" ref="VSP_060882"/>
    </isoform>
</comment>
<comment type="domain">
    <text evidence="2">The WD repeats mediate interaction with substrates of the SCF (SKP1-CUL1-F-box protein) E3 ubiquitin-protein ligase complex.</text>
</comment>
<comment type="domain">
    <text evidence="2">The F-box domain mediates interaction with SKP1.</text>
</comment>
<comment type="PTM">
    <text evidence="2">Phosphorylation at Thr-204 promotes interaction with PIN1, leading to disrupt FBXW7 dimerization and promoting FBXW7 autoubiquitination and degradation. Phosphorylated by ATM at Ser-26 in response to DNA damage, promoting recruitment to DNA damage sites and 'Lys-63'-linked ubiquitination of phosphorylated XRCC4.</text>
</comment>
<comment type="PTM">
    <text evidence="2 6">Ubiquitinated: autoubiquitinates following phosphorylation at Thr-204 and subsequent interaction with PIN1 (PubMed:25624101). Ubiquitination leads to its degradation (PubMed:25624101).</text>
</comment>
<sequence>MNQELLSVGSKRRRTGGSLRGNPSSSQADEEQMNRVLEEEQQQPRHQEEEHAARNGEVVGAEPRPGDQNDPQQGQLEENNNRFISVDEDSSGNQEEQEEDEEHAGEQDEEDEEEEEMDQESDDFDQSDDSSREDEHTHRNSVTNSNSIVDLPIHQRSSPFYTKTTKMKRKLDHGSEVRSFSLGKKPCKVSEYTSTTGLVPCSATPTTFGDLRAANGQGQQRRRITSVQPPTGLQEWLKMFQSWSGPEKLLALDELIDSCEPTQVKHMMQVIEPQFQRDFISLLPKELALYVLSFLEPKDLLQAAQTCRYWRILAEDNLLWREKCKEEGIDEPLHIKRRKVIKPGFIHSPWKSAYIRQHRIDTNWRRGELKSPKVLKGHDDHVITCLQFCGNRIVSGSDDNTLKVWSAVTGKCLRTLVGHTGGVWSSQMRDNIIISGSTDRTLKVWNAETGECIHTLYGHTSTVRCMHLHEKRVVSGSRDATLRVWDIETGQCLHVLMGHVAAVRCVQYDGRRVVSGAYDFMVKVWDPETETCLHTLQGHTNRVYSLQFDGIHVVSGSLDTSIRVWDVETGNCIHTLTGHQSLTSGMELKDNILVSGNADSTVKIWDIKTGQCLQTLQGPNKHQSAVTCLQFNKNFVITSSDDGTVKLWDLKTGEFIRNLVTLESGGSGGVVWRIRASNTKLVCAVGSRNGTEETKLLVLDFDVDMK</sequence>